<proteinExistence type="inferred from homology"/>
<accession>B9DUV7</accession>
<keyword id="KW-0067">ATP-binding</keyword>
<keyword id="KW-0131">Cell cycle</keyword>
<keyword id="KW-0132">Cell division</keyword>
<keyword id="KW-0133">Cell shape</keyword>
<keyword id="KW-0961">Cell wall biogenesis/degradation</keyword>
<keyword id="KW-0963">Cytoplasm</keyword>
<keyword id="KW-0436">Ligase</keyword>
<keyword id="KW-0547">Nucleotide-binding</keyword>
<keyword id="KW-0573">Peptidoglycan synthesis</keyword>
<keyword id="KW-1185">Reference proteome</keyword>
<feature type="chain" id="PRO_1000147415" description="UDP-N-acetylmuramoylalanine--D-glutamate ligase">
    <location>
        <begin position="1"/>
        <end position="453"/>
    </location>
</feature>
<feature type="binding site" evidence="1">
    <location>
        <begin position="119"/>
        <end position="125"/>
    </location>
    <ligand>
        <name>ATP</name>
        <dbReference type="ChEBI" id="CHEBI:30616"/>
    </ligand>
</feature>
<gene>
    <name evidence="1" type="primary">murD</name>
    <name type="ordered locus">SUB1294</name>
</gene>
<organism>
    <name type="scientific">Streptococcus uberis (strain ATCC BAA-854 / 0140J)</name>
    <dbReference type="NCBI Taxonomy" id="218495"/>
    <lineage>
        <taxon>Bacteria</taxon>
        <taxon>Bacillati</taxon>
        <taxon>Bacillota</taxon>
        <taxon>Bacilli</taxon>
        <taxon>Lactobacillales</taxon>
        <taxon>Streptococcaceae</taxon>
        <taxon>Streptococcus</taxon>
    </lineage>
</organism>
<protein>
    <recommendedName>
        <fullName evidence="1">UDP-N-acetylmuramoylalanine--D-glutamate ligase</fullName>
        <ecNumber evidence="1">6.3.2.9</ecNumber>
    </recommendedName>
    <alternativeName>
        <fullName evidence="1">D-glutamic acid-adding enzyme</fullName>
    </alternativeName>
    <alternativeName>
        <fullName evidence="1">UDP-N-acetylmuramoyl-L-alanyl-D-glutamate synthetase</fullName>
    </alternativeName>
</protein>
<name>MURD_STRU0</name>
<reference key="1">
    <citation type="journal article" date="2009" name="BMC Genomics">
        <title>Evidence for niche adaptation in the genome of the bovine pathogen Streptococcus uberis.</title>
        <authorList>
            <person name="Ward P.N."/>
            <person name="Holden M.T.G."/>
            <person name="Leigh J.A."/>
            <person name="Lennard N."/>
            <person name="Bignell A."/>
            <person name="Barron A."/>
            <person name="Clark L."/>
            <person name="Quail M.A."/>
            <person name="Woodward J."/>
            <person name="Barrell B.G."/>
            <person name="Egan S.A."/>
            <person name="Field T.R."/>
            <person name="Maskell D."/>
            <person name="Kehoe M."/>
            <person name="Dowson C.G."/>
            <person name="Chanter N."/>
            <person name="Whatmore A.M."/>
            <person name="Bentley S.D."/>
            <person name="Parkhill J."/>
        </authorList>
    </citation>
    <scope>NUCLEOTIDE SEQUENCE [LARGE SCALE GENOMIC DNA]</scope>
    <source>
        <strain>ATCC BAA-854 / 0140J</strain>
    </source>
</reference>
<sequence>MKECKTFNNKKVLILGLAKSGEAAARLLSRLGAIVTVNDGKAFEENPAAQSLLEEGIKVVCGSHPLELLDEDFAVMVKNPGIPYQNPMVEKALSKGIPVLTEVELAYLISEAPIIAITGSNGKTTTTTMIADVLNHGGKSALLSGNIGFPASEVAMTASQDDILTMELSSFQLMGIKDFHPHIALITNLMPTHLDYHGSFDAYIQAKWNIQNNMTADDVLILNAEQDQTKELAQKTQASLVYFSSKEKVEGAYQEDGKLFYKGEYIMDAQSLGVPGLHNVENALATIAVAKLSGISNQAIAETLSSFGGVKHRLQKLGTIKDVAFYNDSKSTNILACQKALSGFDNNKVILIAGGLDRGNAFDTLIPDIKGLKKMILLGESAEKMKEAAERAGVGYLEAKDVADATRIAFEQAQPGDIILLSPANASWDMYPNFEVRGDEFIESFQQLKGDME</sequence>
<comment type="function">
    <text evidence="1">Cell wall formation. Catalyzes the addition of glutamate to the nucleotide precursor UDP-N-acetylmuramoyl-L-alanine (UMA).</text>
</comment>
<comment type="catalytic activity">
    <reaction evidence="1">
        <text>UDP-N-acetyl-alpha-D-muramoyl-L-alanine + D-glutamate + ATP = UDP-N-acetyl-alpha-D-muramoyl-L-alanyl-D-glutamate + ADP + phosphate + H(+)</text>
        <dbReference type="Rhea" id="RHEA:16429"/>
        <dbReference type="ChEBI" id="CHEBI:15378"/>
        <dbReference type="ChEBI" id="CHEBI:29986"/>
        <dbReference type="ChEBI" id="CHEBI:30616"/>
        <dbReference type="ChEBI" id="CHEBI:43474"/>
        <dbReference type="ChEBI" id="CHEBI:83898"/>
        <dbReference type="ChEBI" id="CHEBI:83900"/>
        <dbReference type="ChEBI" id="CHEBI:456216"/>
        <dbReference type="EC" id="6.3.2.9"/>
    </reaction>
</comment>
<comment type="pathway">
    <text evidence="1">Cell wall biogenesis; peptidoglycan biosynthesis.</text>
</comment>
<comment type="subcellular location">
    <subcellularLocation>
        <location evidence="1">Cytoplasm</location>
    </subcellularLocation>
</comment>
<comment type="similarity">
    <text evidence="1">Belongs to the MurCDEF family.</text>
</comment>
<evidence type="ECO:0000255" key="1">
    <source>
        <dbReference type="HAMAP-Rule" id="MF_00639"/>
    </source>
</evidence>
<dbReference type="EC" id="6.3.2.9" evidence="1"/>
<dbReference type="EMBL" id="AM946015">
    <property type="protein sequence ID" value="CAR42820.1"/>
    <property type="molecule type" value="Genomic_DNA"/>
</dbReference>
<dbReference type="RefSeq" id="WP_012658768.1">
    <property type="nucleotide sequence ID" value="NC_012004.1"/>
</dbReference>
<dbReference type="SMR" id="B9DUV7"/>
<dbReference type="STRING" id="218495.SUB1294"/>
<dbReference type="KEGG" id="sub:SUB1294"/>
<dbReference type="eggNOG" id="COG0771">
    <property type="taxonomic scope" value="Bacteria"/>
</dbReference>
<dbReference type="HOGENOM" id="CLU_032540_0_1_9"/>
<dbReference type="OrthoDB" id="9809796at2"/>
<dbReference type="UniPathway" id="UPA00219"/>
<dbReference type="Proteomes" id="UP000000449">
    <property type="component" value="Chromosome"/>
</dbReference>
<dbReference type="GO" id="GO:0005737">
    <property type="term" value="C:cytoplasm"/>
    <property type="evidence" value="ECO:0007669"/>
    <property type="project" value="UniProtKB-SubCell"/>
</dbReference>
<dbReference type="GO" id="GO:0005524">
    <property type="term" value="F:ATP binding"/>
    <property type="evidence" value="ECO:0007669"/>
    <property type="project" value="UniProtKB-UniRule"/>
</dbReference>
<dbReference type="GO" id="GO:0008764">
    <property type="term" value="F:UDP-N-acetylmuramoylalanine-D-glutamate ligase activity"/>
    <property type="evidence" value="ECO:0007669"/>
    <property type="project" value="UniProtKB-UniRule"/>
</dbReference>
<dbReference type="GO" id="GO:0051301">
    <property type="term" value="P:cell division"/>
    <property type="evidence" value="ECO:0007669"/>
    <property type="project" value="UniProtKB-KW"/>
</dbReference>
<dbReference type="GO" id="GO:0071555">
    <property type="term" value="P:cell wall organization"/>
    <property type="evidence" value="ECO:0007669"/>
    <property type="project" value="UniProtKB-KW"/>
</dbReference>
<dbReference type="GO" id="GO:0009252">
    <property type="term" value="P:peptidoglycan biosynthetic process"/>
    <property type="evidence" value="ECO:0007669"/>
    <property type="project" value="UniProtKB-UniRule"/>
</dbReference>
<dbReference type="GO" id="GO:0008360">
    <property type="term" value="P:regulation of cell shape"/>
    <property type="evidence" value="ECO:0007669"/>
    <property type="project" value="UniProtKB-KW"/>
</dbReference>
<dbReference type="Gene3D" id="3.90.190.20">
    <property type="entry name" value="Mur ligase, C-terminal domain"/>
    <property type="match status" value="1"/>
</dbReference>
<dbReference type="Gene3D" id="3.40.1190.10">
    <property type="entry name" value="Mur-like, catalytic domain"/>
    <property type="match status" value="1"/>
</dbReference>
<dbReference type="Gene3D" id="3.40.50.720">
    <property type="entry name" value="NAD(P)-binding Rossmann-like Domain"/>
    <property type="match status" value="1"/>
</dbReference>
<dbReference type="HAMAP" id="MF_00639">
    <property type="entry name" value="MurD"/>
    <property type="match status" value="1"/>
</dbReference>
<dbReference type="InterPro" id="IPR036565">
    <property type="entry name" value="Mur-like_cat_sf"/>
</dbReference>
<dbReference type="InterPro" id="IPR004101">
    <property type="entry name" value="Mur_ligase_C"/>
</dbReference>
<dbReference type="InterPro" id="IPR036615">
    <property type="entry name" value="Mur_ligase_C_dom_sf"/>
</dbReference>
<dbReference type="InterPro" id="IPR013221">
    <property type="entry name" value="Mur_ligase_cen"/>
</dbReference>
<dbReference type="InterPro" id="IPR005762">
    <property type="entry name" value="MurD"/>
</dbReference>
<dbReference type="NCBIfam" id="TIGR01087">
    <property type="entry name" value="murD"/>
    <property type="match status" value="1"/>
</dbReference>
<dbReference type="PANTHER" id="PTHR43692">
    <property type="entry name" value="UDP-N-ACETYLMURAMOYLALANINE--D-GLUTAMATE LIGASE"/>
    <property type="match status" value="1"/>
</dbReference>
<dbReference type="PANTHER" id="PTHR43692:SF1">
    <property type="entry name" value="UDP-N-ACETYLMURAMOYLALANINE--D-GLUTAMATE LIGASE"/>
    <property type="match status" value="1"/>
</dbReference>
<dbReference type="Pfam" id="PF02875">
    <property type="entry name" value="Mur_ligase_C"/>
    <property type="match status" value="1"/>
</dbReference>
<dbReference type="Pfam" id="PF08245">
    <property type="entry name" value="Mur_ligase_M"/>
    <property type="match status" value="1"/>
</dbReference>
<dbReference type="Pfam" id="PF21799">
    <property type="entry name" value="MurD-like_N"/>
    <property type="match status" value="1"/>
</dbReference>
<dbReference type="SUPFAM" id="SSF51984">
    <property type="entry name" value="MurCD N-terminal domain"/>
    <property type="match status" value="1"/>
</dbReference>
<dbReference type="SUPFAM" id="SSF53623">
    <property type="entry name" value="MurD-like peptide ligases, catalytic domain"/>
    <property type="match status" value="1"/>
</dbReference>
<dbReference type="SUPFAM" id="SSF53244">
    <property type="entry name" value="MurD-like peptide ligases, peptide-binding domain"/>
    <property type="match status" value="1"/>
</dbReference>